<protein>
    <recommendedName>
        <fullName>Cobalamin-binding protein</fullName>
    </recommendedName>
    <alternativeName>
        <fullName>Vitamin B12-binding protein</fullName>
    </alternativeName>
</protein>
<dbReference type="EMBL" id="AE004437">
    <property type="protein sequence ID" value="AAG19697.1"/>
    <property type="molecule type" value="Genomic_DNA"/>
</dbReference>
<dbReference type="PIR" id="E84291">
    <property type="entry name" value="E84291"/>
</dbReference>
<dbReference type="RefSeq" id="WP_010902993.1">
    <property type="nucleotide sequence ID" value="NC_002607.1"/>
</dbReference>
<dbReference type="SMR" id="Q9HQ20"/>
<dbReference type="STRING" id="64091.VNG_1369G"/>
<dbReference type="TCDB" id="3.A.1.14.9">
    <property type="family name" value="the atp-binding cassette (abc) superfamily"/>
</dbReference>
<dbReference type="PaxDb" id="64091-VNG_1369G"/>
<dbReference type="KEGG" id="hal:VNG_1369G"/>
<dbReference type="PATRIC" id="fig|64091.14.peg.1045"/>
<dbReference type="HOGENOM" id="CLU_038034_2_1_2"/>
<dbReference type="InParanoid" id="Q9HQ20"/>
<dbReference type="OrthoDB" id="214567at2157"/>
<dbReference type="PhylomeDB" id="Q9HQ20"/>
<dbReference type="Proteomes" id="UP000000554">
    <property type="component" value="Chromosome"/>
</dbReference>
<dbReference type="Gene3D" id="3.40.50.1980">
    <property type="entry name" value="Nitrogenase molybdenum iron protein domain"/>
    <property type="match status" value="2"/>
</dbReference>
<dbReference type="InterPro" id="IPR050902">
    <property type="entry name" value="ABC_Transporter_SBP"/>
</dbReference>
<dbReference type="InterPro" id="IPR002491">
    <property type="entry name" value="ABC_transptr_periplasmic_BD"/>
</dbReference>
<dbReference type="InterPro" id="IPR026469">
    <property type="entry name" value="Peripla_PGF_1"/>
</dbReference>
<dbReference type="InterPro" id="IPR054828">
    <property type="entry name" value="Vit_B12_bind_prot"/>
</dbReference>
<dbReference type="NCBIfam" id="TIGR04281">
    <property type="entry name" value="peripla_PGF_1"/>
    <property type="match status" value="1"/>
</dbReference>
<dbReference type="NCBIfam" id="NF038402">
    <property type="entry name" value="TroA_like"/>
    <property type="match status" value="1"/>
</dbReference>
<dbReference type="PANTHER" id="PTHR30535:SF34">
    <property type="entry name" value="MOLYBDATE-BINDING PROTEIN MOLA"/>
    <property type="match status" value="1"/>
</dbReference>
<dbReference type="PANTHER" id="PTHR30535">
    <property type="entry name" value="VITAMIN B12-BINDING PROTEIN"/>
    <property type="match status" value="1"/>
</dbReference>
<dbReference type="Pfam" id="PF01497">
    <property type="entry name" value="Peripla_BP_2"/>
    <property type="match status" value="1"/>
</dbReference>
<dbReference type="Pfam" id="PF18204">
    <property type="entry name" value="PGF-CTERM"/>
    <property type="match status" value="1"/>
</dbReference>
<dbReference type="SUPFAM" id="SSF53807">
    <property type="entry name" value="Helical backbone' metal receptor"/>
    <property type="match status" value="1"/>
</dbReference>
<dbReference type="PROSITE" id="PS50983">
    <property type="entry name" value="FE_B12_PBP"/>
    <property type="match status" value="1"/>
</dbReference>
<reference key="1">
    <citation type="journal article" date="2000" name="Proc. Natl. Acad. Sci. U.S.A.">
        <title>Genome sequence of Halobacterium species NRC-1.</title>
        <authorList>
            <person name="Ng W.V."/>
            <person name="Kennedy S.P."/>
            <person name="Mahairas G.G."/>
            <person name="Berquist B."/>
            <person name="Pan M."/>
            <person name="Shukla H.D."/>
            <person name="Lasky S.R."/>
            <person name="Baliga N.S."/>
            <person name="Thorsson V."/>
            <person name="Sbrogna J."/>
            <person name="Swartzell S."/>
            <person name="Weir D."/>
            <person name="Hall J."/>
            <person name="Dahl T.A."/>
            <person name="Welti R."/>
            <person name="Goo Y.A."/>
            <person name="Leithauser B."/>
            <person name="Keller K."/>
            <person name="Cruz R."/>
            <person name="Danson M.J."/>
            <person name="Hough D.W."/>
            <person name="Maddocks D.G."/>
            <person name="Jablonski P.E."/>
            <person name="Krebs M.P."/>
            <person name="Angevine C.M."/>
            <person name="Dale H."/>
            <person name="Isenbarger T.A."/>
            <person name="Peck R.F."/>
            <person name="Pohlschroder M."/>
            <person name="Spudich J.L."/>
            <person name="Jung K.-H."/>
            <person name="Alam M."/>
            <person name="Freitas T."/>
            <person name="Hou S."/>
            <person name="Daniels C.J."/>
            <person name="Dennis P.P."/>
            <person name="Omer A.D."/>
            <person name="Ebhardt H."/>
            <person name="Lowe T.M."/>
            <person name="Liang P."/>
            <person name="Riley M."/>
            <person name="Hood L."/>
            <person name="DasSarma S."/>
        </authorList>
    </citation>
    <scope>NUCLEOTIDE SEQUENCE [LARGE SCALE GENOMIC DNA]</scope>
    <source>
        <strain>ATCC 700922 / JCM 11081 / NRC-1</strain>
    </source>
</reference>
<reference key="2">
    <citation type="journal article" date="2005" name="J. Bacteriol.">
        <title>ABC transporter for corrinoids in Halobacterium sp. strain NRC-1.</title>
        <authorList>
            <person name="Woodson J.D."/>
            <person name="Reynolds A.A."/>
            <person name="Escalante-Semerena J.C."/>
        </authorList>
    </citation>
    <scope>FUNCTION IN CORRINOID UTILIZATION</scope>
    <source>
        <strain>ATCC 700922 / JCM 11081 / NRC-1</strain>
    </source>
</reference>
<sequence>MHRGRFATLVIVALAVTMTAPAGALAPQPPAQHADADRACSFPVTEPDASNTAITLDSEPERVVTLNPSAAQTMWELGDRDAVVGVSQFGTYLPTASQRTVVSGGQPSQTNVEAVVGLDPDLVLAPNTVRNTTVTRLRSAGITVFQFRAATSIDGVVEKTATIGRLTGNCAAAAATTAEMRDRVAAIADAVPDTDSARPRVYYHLGDGYTAGPNTFIGAAIEAAGGHNIAADVNTTSSYPQLSEEVIVSQDPDVVVTGVSADRLDATASALVAPSSVVRNTTAYATGNVVAVNTNHINQPAPRIVEPMARMANAFHNTTINTTLDAQPSATTTATSTAPPTDAADGTAPGFGVAAAVCALAGAALVARR</sequence>
<organism>
    <name type="scientific">Halobacterium salinarum (strain ATCC 700922 / JCM 11081 / NRC-1)</name>
    <name type="common">Halobacterium halobium</name>
    <dbReference type="NCBI Taxonomy" id="64091"/>
    <lineage>
        <taxon>Archaea</taxon>
        <taxon>Methanobacteriati</taxon>
        <taxon>Methanobacteriota</taxon>
        <taxon>Stenosarchaea group</taxon>
        <taxon>Halobacteria</taxon>
        <taxon>Halobacteriales</taxon>
        <taxon>Halobacteriaceae</taxon>
        <taxon>Halobacterium</taxon>
        <taxon>Halobacterium salinarum NRC-34001</taxon>
    </lineage>
</organism>
<accession>Q9HQ20</accession>
<evidence type="ECO:0000255" key="1"/>
<evidence type="ECO:0000255" key="2">
    <source>
        <dbReference type="PROSITE-ProRule" id="PRU00344"/>
    </source>
</evidence>
<evidence type="ECO:0000256" key="3">
    <source>
        <dbReference type="SAM" id="MobiDB-lite"/>
    </source>
</evidence>
<evidence type="ECO:0000269" key="4">
    <source>
    </source>
</evidence>
<evidence type="ECO:0000305" key="5"/>
<comment type="function">
    <text evidence="4">Required for corrinoid utilization. Probably part of the ABC transporter complex BtuCDF involved in cobalamin (vitamin B12) import. Probably binds cobalamin and delivers it to the surface of BtuC.</text>
</comment>
<comment type="subunit">
    <text evidence="5">The complex is composed of two ATP-binding proteins (BtuD), two transmembrane proteins (BtuC) and a solute-binding protein (BtuF).</text>
</comment>
<keyword id="KW-1185">Reference proteome</keyword>
<keyword id="KW-0732">Signal</keyword>
<keyword id="KW-0813">Transport</keyword>
<feature type="signal peptide" evidence="1">
    <location>
        <begin position="1"/>
        <end position="24"/>
    </location>
</feature>
<feature type="chain" id="PRO_0000408971" description="Cobalamin-binding protein">
    <location>
        <begin position="25"/>
        <end position="369"/>
    </location>
</feature>
<feature type="domain" description="Fe/B12 periplasmic-binding" evidence="2">
    <location>
        <begin position="62"/>
        <end position="319"/>
    </location>
</feature>
<feature type="region of interest" description="Disordered" evidence="3">
    <location>
        <begin position="322"/>
        <end position="343"/>
    </location>
</feature>
<feature type="compositionally biased region" description="Low complexity" evidence="3">
    <location>
        <begin position="328"/>
        <end position="343"/>
    </location>
</feature>
<proteinExistence type="evidence at protein level"/>
<gene>
    <name type="primary">btuF</name>
    <name type="synonym">hemV1</name>
    <name type="ordered locus">VNG_1369G</name>
</gene>
<name>BTUFA_HALSA</name>